<comment type="function">
    <text evidence="1">Catalyzes the dehydration of the S-form of NAD(P)HX at the expense of ATP, which is converted to ADP. Together with NAD(P)HX epimerase, which catalyzes the epimerization of the S- and R-forms, the enzyme allows the repair of both epimers of NAD(P)HX, a damaged form of NAD(P)H that is a result of enzymatic or heat-dependent hydration.</text>
</comment>
<comment type="catalytic activity">
    <reaction evidence="1">
        <text>(6S)-NADHX + ATP = ADP + phosphate + NADH + H(+)</text>
        <dbReference type="Rhea" id="RHEA:19017"/>
        <dbReference type="ChEBI" id="CHEBI:15378"/>
        <dbReference type="ChEBI" id="CHEBI:30616"/>
        <dbReference type="ChEBI" id="CHEBI:43474"/>
        <dbReference type="ChEBI" id="CHEBI:57945"/>
        <dbReference type="ChEBI" id="CHEBI:64074"/>
        <dbReference type="ChEBI" id="CHEBI:456216"/>
        <dbReference type="EC" id="4.2.1.93"/>
    </reaction>
</comment>
<comment type="catalytic activity">
    <reaction>
        <text>(6S)-NADPHX + ATP = ADP + phosphate + NADPH + H(+)</text>
        <dbReference type="Rhea" id="RHEA:32231"/>
        <dbReference type="ChEBI" id="CHEBI:15378"/>
        <dbReference type="ChEBI" id="CHEBI:30616"/>
        <dbReference type="ChEBI" id="CHEBI:43474"/>
        <dbReference type="ChEBI" id="CHEBI:57783"/>
        <dbReference type="ChEBI" id="CHEBI:64076"/>
        <dbReference type="ChEBI" id="CHEBI:456216"/>
        <dbReference type="EC" id="4.2.1.93"/>
    </reaction>
</comment>
<comment type="cofactor">
    <cofactor evidence="1">
        <name>Mg(2+)</name>
        <dbReference type="ChEBI" id="CHEBI:18420"/>
    </cofactor>
</comment>
<comment type="subcellular location">
    <subcellularLocation>
        <location evidence="1">Cytoplasm</location>
    </subcellularLocation>
</comment>
<comment type="similarity">
    <text evidence="1">Belongs to the NnrD/CARKD family.</text>
</comment>
<accession>E3LAQ9</accession>
<evidence type="ECO:0000255" key="1">
    <source>
        <dbReference type="HAMAP-Rule" id="MF_03157"/>
    </source>
</evidence>
<organism>
    <name type="scientific">Puccinia graminis f. sp. tritici (strain CRL 75-36-700-3 / race SCCL)</name>
    <name type="common">Black stem rust fungus</name>
    <dbReference type="NCBI Taxonomy" id="418459"/>
    <lineage>
        <taxon>Eukaryota</taxon>
        <taxon>Fungi</taxon>
        <taxon>Dikarya</taxon>
        <taxon>Basidiomycota</taxon>
        <taxon>Pucciniomycotina</taxon>
        <taxon>Pucciniomycetes</taxon>
        <taxon>Pucciniales</taxon>
        <taxon>Pucciniaceae</taxon>
        <taxon>Puccinia</taxon>
    </lineage>
</organism>
<sequence length="398" mass="43998">MVLTTRHHLDGFRSIQVMLGALEHPLDVMKASKGRSCSENDHRMYRFSKNLPRGVCSPLTTGPHPTTHLEPTMHQPHRSLLRKAFQMIPPLDGSLHKGQAGRIGIVGGSKDYTGAPFYSGYASLRLGSDLSHVICEPSASTVIKTYSPDLMVHSYLSSPKEPEAYASHQNLFEQLLDRLHVLVVGPGLGRDTEMQDWAEWTLKTAIKKKLHLVLDADALWLLVKKPDLLRGYPNAILTPNHVEFQRLLKACSIEPRENDDDGLLAMELSKALGGCSILQKGSIDLVAREGSEVAKVSCEGSPKRCGGQGDILSGLVGTWCAWTKLYFERQSQDEKPKSHELPISSEEAWIIAAVLGSEITRTCSRLAYHKLGRSMQSSDMLGYIGEAFELVMHGHTKD</sequence>
<reference key="1">
    <citation type="journal article" date="2011" name="Proc. Natl. Acad. Sci. U.S.A.">
        <title>Obligate biotrophy features unraveled by the genomic analysis of rust fungi.</title>
        <authorList>
            <person name="Duplessis S."/>
            <person name="Cuomo C.A."/>
            <person name="Lin Y.-C."/>
            <person name="Aerts A."/>
            <person name="Tisserant E."/>
            <person name="Veneault-Fourrey C."/>
            <person name="Joly D.L."/>
            <person name="Hacquard S."/>
            <person name="Amselem J."/>
            <person name="Cantarel B.L."/>
            <person name="Chiu R."/>
            <person name="Coutinho P.M."/>
            <person name="Feau N."/>
            <person name="Field M."/>
            <person name="Frey P."/>
            <person name="Gelhaye E."/>
            <person name="Goldberg J."/>
            <person name="Grabherr M.G."/>
            <person name="Kodira C.D."/>
            <person name="Kohler A."/>
            <person name="Kuees U."/>
            <person name="Lindquist E.A."/>
            <person name="Lucas S.M."/>
            <person name="Mago R."/>
            <person name="Mauceli E."/>
            <person name="Morin E."/>
            <person name="Murat C."/>
            <person name="Pangilinan J.L."/>
            <person name="Park R."/>
            <person name="Pearson M."/>
            <person name="Quesneville H."/>
            <person name="Rouhier N."/>
            <person name="Sakthikumar S."/>
            <person name="Salamov A.A."/>
            <person name="Schmutz J."/>
            <person name="Selles B."/>
            <person name="Shapiro H."/>
            <person name="Tanguay P."/>
            <person name="Tuskan G.A."/>
            <person name="Henrissat B."/>
            <person name="Van de Peer Y."/>
            <person name="Rouze P."/>
            <person name="Ellis J.G."/>
            <person name="Dodds P.N."/>
            <person name="Schein J.E."/>
            <person name="Zhong S."/>
            <person name="Hamelin R.C."/>
            <person name="Grigoriev I.V."/>
            <person name="Szabo L.J."/>
            <person name="Martin F."/>
        </authorList>
    </citation>
    <scope>NUCLEOTIDE SEQUENCE [LARGE SCALE GENOMIC DNA]</scope>
    <source>
        <strain>CRL 75-36-700-3 / race SCCL</strain>
    </source>
</reference>
<reference key="2">
    <citation type="journal article" date="2017" name="G3 (Bethesda)">
        <title>Comparative analysis highlights variable genome content of wheat rusts and divergence of the mating loci.</title>
        <authorList>
            <person name="Cuomo C.A."/>
            <person name="Bakkeren G."/>
            <person name="Khalil H.B."/>
            <person name="Panwar V."/>
            <person name="Joly D."/>
            <person name="Linning R."/>
            <person name="Sakthikumar S."/>
            <person name="Song X."/>
            <person name="Adiconis X."/>
            <person name="Fan L."/>
            <person name="Goldberg J.M."/>
            <person name="Levin J.Z."/>
            <person name="Young S."/>
            <person name="Zeng Q."/>
            <person name="Anikster Y."/>
            <person name="Bruce M."/>
            <person name="Wang M."/>
            <person name="Yin C."/>
            <person name="McCallum B."/>
            <person name="Szabo L.J."/>
            <person name="Hulbert S."/>
            <person name="Chen X."/>
            <person name="Fellers J.P."/>
        </authorList>
    </citation>
    <scope>GENOME REANNOTATION</scope>
    <source>
        <strain>CRL 75-36-700-3 / race SCCL</strain>
    </source>
</reference>
<protein>
    <recommendedName>
        <fullName evidence="1">ATP-dependent (S)-NAD(P)H-hydrate dehydratase 1</fullName>
        <ecNumber evidence="1">4.2.1.93</ecNumber>
    </recommendedName>
    <alternativeName>
        <fullName evidence="1">ATP-dependent NAD(P)HX dehydratase 1</fullName>
    </alternativeName>
</protein>
<proteinExistence type="inferred from homology"/>
<gene>
    <name type="ORF">PGTG_19583</name>
</gene>
<keyword id="KW-0067">ATP-binding</keyword>
<keyword id="KW-0963">Cytoplasm</keyword>
<keyword id="KW-0456">Lyase</keyword>
<keyword id="KW-0520">NAD</keyword>
<keyword id="KW-0521">NADP</keyword>
<keyword id="KW-0547">Nucleotide-binding</keyword>
<keyword id="KW-0597">Phosphoprotein</keyword>
<keyword id="KW-1185">Reference proteome</keyword>
<feature type="chain" id="PRO_0000416189" description="ATP-dependent (S)-NAD(P)H-hydrate dehydratase 1">
    <location>
        <begin position="1"/>
        <end position="398"/>
    </location>
</feature>
<feature type="domain" description="YjeF C-terminal" evidence="1">
    <location>
        <begin position="80"/>
        <end position="391"/>
    </location>
</feature>
<feature type="binding site" evidence="1">
    <location>
        <position position="187"/>
    </location>
    <ligand>
        <name>(6S)-NADPHX</name>
        <dbReference type="ChEBI" id="CHEBI:64076"/>
    </ligand>
</feature>
<feature type="binding site" evidence="1">
    <location>
        <begin position="240"/>
        <end position="246"/>
    </location>
    <ligand>
        <name>(6S)-NADPHX</name>
        <dbReference type="ChEBI" id="CHEBI:64076"/>
    </ligand>
</feature>
<feature type="binding site" evidence="1">
    <location>
        <begin position="280"/>
        <end position="284"/>
    </location>
    <ligand>
        <name>ATP</name>
        <dbReference type="ChEBI" id="CHEBI:30616"/>
    </ligand>
</feature>
<feature type="binding site" evidence="1">
    <location>
        <begin position="300"/>
        <end position="309"/>
    </location>
    <ligand>
        <name>ATP</name>
        <dbReference type="ChEBI" id="CHEBI:30616"/>
    </ligand>
</feature>
<feature type="binding site" evidence="1">
    <location>
        <position position="310"/>
    </location>
    <ligand>
        <name>(6S)-NADPHX</name>
        <dbReference type="ChEBI" id="CHEBI:64076"/>
    </ligand>
</feature>
<name>NNRD1_PUCGT</name>
<dbReference type="EC" id="4.2.1.93" evidence="1"/>
<dbReference type="EMBL" id="DS178401">
    <property type="protein sequence ID" value="EFP93634.2"/>
    <property type="molecule type" value="Genomic_DNA"/>
</dbReference>
<dbReference type="RefSeq" id="XP_003338053.2">
    <property type="nucleotide sequence ID" value="XM_003338005.2"/>
</dbReference>
<dbReference type="SMR" id="E3LAQ9"/>
<dbReference type="FunCoup" id="E3LAQ9">
    <property type="interactions" value="19"/>
</dbReference>
<dbReference type="STRING" id="418459.E3LAQ9"/>
<dbReference type="EnsemblFungi" id="EFP93634">
    <property type="protein sequence ID" value="EFP93634"/>
    <property type="gene ID" value="PGTG_19583"/>
</dbReference>
<dbReference type="GeneID" id="10534923"/>
<dbReference type="KEGG" id="pgr:PGTG_19583"/>
<dbReference type="VEuPathDB" id="FungiDB:PGTG_19583"/>
<dbReference type="InParanoid" id="E3LAQ9"/>
<dbReference type="OrthoDB" id="8110916at2759"/>
<dbReference type="Proteomes" id="UP000008783">
    <property type="component" value="Unassembled WGS sequence"/>
</dbReference>
<dbReference type="GO" id="GO:0005737">
    <property type="term" value="C:cytoplasm"/>
    <property type="evidence" value="ECO:0007669"/>
    <property type="project" value="UniProtKB-SubCell"/>
</dbReference>
<dbReference type="GO" id="GO:0005524">
    <property type="term" value="F:ATP binding"/>
    <property type="evidence" value="ECO:0007669"/>
    <property type="project" value="UniProtKB-KW"/>
</dbReference>
<dbReference type="GO" id="GO:0047453">
    <property type="term" value="F:ATP-dependent NAD(P)H-hydrate dehydratase activity"/>
    <property type="evidence" value="ECO:0000318"/>
    <property type="project" value="GO_Central"/>
</dbReference>
<dbReference type="GO" id="GO:0110051">
    <property type="term" value="P:metabolite repair"/>
    <property type="evidence" value="ECO:0000318"/>
    <property type="project" value="GO_Central"/>
</dbReference>
<dbReference type="GO" id="GO:0046496">
    <property type="term" value="P:nicotinamide nucleotide metabolic process"/>
    <property type="evidence" value="ECO:0007669"/>
    <property type="project" value="UniProtKB-UniRule"/>
</dbReference>
<dbReference type="CDD" id="cd01171">
    <property type="entry name" value="YXKO-related"/>
    <property type="match status" value="1"/>
</dbReference>
<dbReference type="FunFam" id="3.40.1190.20:FF:000023">
    <property type="entry name" value="ATP-dependent (S)-NAD(P)H-hydrate dehydratase"/>
    <property type="match status" value="1"/>
</dbReference>
<dbReference type="Gene3D" id="3.40.1190.20">
    <property type="match status" value="1"/>
</dbReference>
<dbReference type="HAMAP" id="MF_01965">
    <property type="entry name" value="NADHX_dehydratase"/>
    <property type="match status" value="1"/>
</dbReference>
<dbReference type="InterPro" id="IPR000631">
    <property type="entry name" value="CARKD"/>
</dbReference>
<dbReference type="InterPro" id="IPR029056">
    <property type="entry name" value="Ribokinase-like"/>
</dbReference>
<dbReference type="NCBIfam" id="TIGR00196">
    <property type="entry name" value="yjeF_cterm"/>
    <property type="match status" value="1"/>
</dbReference>
<dbReference type="PANTHER" id="PTHR12592:SF0">
    <property type="entry name" value="ATP-DEPENDENT (S)-NAD(P)H-HYDRATE DEHYDRATASE"/>
    <property type="match status" value="1"/>
</dbReference>
<dbReference type="PANTHER" id="PTHR12592">
    <property type="entry name" value="ATP-DEPENDENT (S)-NAD(P)H-HYDRATE DEHYDRATASE FAMILY MEMBER"/>
    <property type="match status" value="1"/>
</dbReference>
<dbReference type="Pfam" id="PF01256">
    <property type="entry name" value="Carb_kinase"/>
    <property type="match status" value="1"/>
</dbReference>
<dbReference type="SUPFAM" id="SSF53613">
    <property type="entry name" value="Ribokinase-like"/>
    <property type="match status" value="1"/>
</dbReference>
<dbReference type="PROSITE" id="PS51383">
    <property type="entry name" value="YJEF_C_3"/>
    <property type="match status" value="1"/>
</dbReference>